<evidence type="ECO:0000250" key="1"/>
<evidence type="ECO:0000255" key="2"/>
<evidence type="ECO:0000256" key="3">
    <source>
        <dbReference type="SAM" id="MobiDB-lite"/>
    </source>
</evidence>
<evidence type="ECO:0000303" key="4">
    <source>
    </source>
</evidence>
<evidence type="ECO:0000305" key="5"/>
<proteinExistence type="evidence at transcript level"/>
<comment type="subcellular location">
    <subcellularLocation>
        <location evidence="1">Membrane</location>
        <topology evidence="5">Multi-pass membrane protein</topology>
    </subcellularLocation>
</comment>
<comment type="alternative products">
    <event type="alternative splicing"/>
    <isoform>
        <id>Q9M131-1</id>
        <name>1</name>
        <sequence type="displayed"/>
    </isoform>
    <isoform>
        <id>Q9M131-2</id>
        <name>2</name>
        <sequence type="described" ref="VSP_045510 VSP_045511 VSP_045512"/>
    </isoform>
</comment>
<comment type="similarity">
    <text evidence="5">Belongs to the drug/metabolite transporter (DMT) superfamily. Plant drug/metabolite exporter (P-DME) (TC 2.A.7.4) family.</text>
</comment>
<comment type="sequence caution" evidence="5">
    <conflict type="erroneous gene model prediction">
        <sequence resource="EMBL-CDS" id="AAC19292"/>
    </conflict>
</comment>
<comment type="sequence caution" evidence="5">
    <conflict type="erroneous initiation">
        <sequence resource="EMBL-CDS" id="BAD94279"/>
    </conflict>
    <text>Truncated N-terminus.</text>
</comment>
<gene>
    <name type="ordered locus">At4g01430</name>
    <name type="ORF">F3D13.4</name>
</gene>
<keyword id="KW-0025">Alternative splicing</keyword>
<keyword id="KW-0472">Membrane</keyword>
<keyword id="KW-1185">Reference proteome</keyword>
<keyword id="KW-0677">Repeat</keyword>
<keyword id="KW-0812">Transmembrane</keyword>
<keyword id="KW-1133">Transmembrane helix</keyword>
<organism>
    <name type="scientific">Arabidopsis thaliana</name>
    <name type="common">Mouse-ear cress</name>
    <dbReference type="NCBI Taxonomy" id="3702"/>
    <lineage>
        <taxon>Eukaryota</taxon>
        <taxon>Viridiplantae</taxon>
        <taxon>Streptophyta</taxon>
        <taxon>Embryophyta</taxon>
        <taxon>Tracheophyta</taxon>
        <taxon>Spermatophyta</taxon>
        <taxon>Magnoliopsida</taxon>
        <taxon>eudicotyledons</taxon>
        <taxon>Gunneridae</taxon>
        <taxon>Pentapetalae</taxon>
        <taxon>rosids</taxon>
        <taxon>malvids</taxon>
        <taxon>Brassicales</taxon>
        <taxon>Brassicaceae</taxon>
        <taxon>Camelineae</taxon>
        <taxon>Arabidopsis</taxon>
    </lineage>
</organism>
<reference key="1">
    <citation type="journal article" date="1999" name="Nature">
        <title>Sequence and analysis of chromosome 4 of the plant Arabidopsis thaliana.</title>
        <authorList>
            <person name="Mayer K.F.X."/>
            <person name="Schueller C."/>
            <person name="Wambutt R."/>
            <person name="Murphy G."/>
            <person name="Volckaert G."/>
            <person name="Pohl T."/>
            <person name="Duesterhoeft A."/>
            <person name="Stiekema W."/>
            <person name="Entian K.-D."/>
            <person name="Terryn N."/>
            <person name="Harris B."/>
            <person name="Ansorge W."/>
            <person name="Brandt P."/>
            <person name="Grivell L.A."/>
            <person name="Rieger M."/>
            <person name="Weichselgartner M."/>
            <person name="de Simone V."/>
            <person name="Obermaier B."/>
            <person name="Mache R."/>
            <person name="Mueller M."/>
            <person name="Kreis M."/>
            <person name="Delseny M."/>
            <person name="Puigdomenech P."/>
            <person name="Watson M."/>
            <person name="Schmidtheini T."/>
            <person name="Reichert B."/>
            <person name="Portetelle D."/>
            <person name="Perez-Alonso M."/>
            <person name="Boutry M."/>
            <person name="Bancroft I."/>
            <person name="Vos P."/>
            <person name="Hoheisel J."/>
            <person name="Zimmermann W."/>
            <person name="Wedler H."/>
            <person name="Ridley P."/>
            <person name="Langham S.-A."/>
            <person name="McCullagh B."/>
            <person name="Bilham L."/>
            <person name="Robben J."/>
            <person name="van der Schueren J."/>
            <person name="Grymonprez B."/>
            <person name="Chuang Y.-J."/>
            <person name="Vandenbussche F."/>
            <person name="Braeken M."/>
            <person name="Weltjens I."/>
            <person name="Voet M."/>
            <person name="Bastiaens I."/>
            <person name="Aert R."/>
            <person name="Defoor E."/>
            <person name="Weitzenegger T."/>
            <person name="Bothe G."/>
            <person name="Ramsperger U."/>
            <person name="Hilbert H."/>
            <person name="Braun M."/>
            <person name="Holzer E."/>
            <person name="Brandt A."/>
            <person name="Peters S."/>
            <person name="van Staveren M."/>
            <person name="Dirkse W."/>
            <person name="Mooijman P."/>
            <person name="Klein Lankhorst R."/>
            <person name="Rose M."/>
            <person name="Hauf J."/>
            <person name="Koetter P."/>
            <person name="Berneiser S."/>
            <person name="Hempel S."/>
            <person name="Feldpausch M."/>
            <person name="Lamberth S."/>
            <person name="Van den Daele H."/>
            <person name="De Keyser A."/>
            <person name="Buysshaert C."/>
            <person name="Gielen J."/>
            <person name="Villarroel R."/>
            <person name="De Clercq R."/>
            <person name="van Montagu M."/>
            <person name="Rogers J."/>
            <person name="Cronin A."/>
            <person name="Quail M.A."/>
            <person name="Bray-Allen S."/>
            <person name="Clark L."/>
            <person name="Doggett J."/>
            <person name="Hall S."/>
            <person name="Kay M."/>
            <person name="Lennard N."/>
            <person name="McLay K."/>
            <person name="Mayes R."/>
            <person name="Pettett A."/>
            <person name="Rajandream M.A."/>
            <person name="Lyne M."/>
            <person name="Benes V."/>
            <person name="Rechmann S."/>
            <person name="Borkova D."/>
            <person name="Bloecker H."/>
            <person name="Scharfe M."/>
            <person name="Grimm M."/>
            <person name="Loehnert T.-H."/>
            <person name="Dose S."/>
            <person name="de Haan M."/>
            <person name="Maarse A.C."/>
            <person name="Schaefer M."/>
            <person name="Mueller-Auer S."/>
            <person name="Gabel C."/>
            <person name="Fuchs M."/>
            <person name="Fartmann B."/>
            <person name="Granderath K."/>
            <person name="Dauner D."/>
            <person name="Herzl A."/>
            <person name="Neumann S."/>
            <person name="Argiriou A."/>
            <person name="Vitale D."/>
            <person name="Liguori R."/>
            <person name="Piravandi E."/>
            <person name="Massenet O."/>
            <person name="Quigley F."/>
            <person name="Clabauld G."/>
            <person name="Muendlein A."/>
            <person name="Felber R."/>
            <person name="Schnabl S."/>
            <person name="Hiller R."/>
            <person name="Schmidt W."/>
            <person name="Lecharny A."/>
            <person name="Aubourg S."/>
            <person name="Chefdor F."/>
            <person name="Cooke R."/>
            <person name="Berger C."/>
            <person name="Monfort A."/>
            <person name="Casacuberta E."/>
            <person name="Gibbons T."/>
            <person name="Weber N."/>
            <person name="Vandenbol M."/>
            <person name="Bargues M."/>
            <person name="Terol J."/>
            <person name="Torres A."/>
            <person name="Perez-Perez A."/>
            <person name="Purnelle B."/>
            <person name="Bent E."/>
            <person name="Johnson S."/>
            <person name="Tacon D."/>
            <person name="Jesse T."/>
            <person name="Heijnen L."/>
            <person name="Schwarz S."/>
            <person name="Scholler P."/>
            <person name="Heber S."/>
            <person name="Francs P."/>
            <person name="Bielke C."/>
            <person name="Frishman D."/>
            <person name="Haase D."/>
            <person name="Lemcke K."/>
            <person name="Mewes H.-W."/>
            <person name="Stocker S."/>
            <person name="Zaccaria P."/>
            <person name="Bevan M."/>
            <person name="Wilson R.K."/>
            <person name="de la Bastide M."/>
            <person name="Habermann K."/>
            <person name="Parnell L."/>
            <person name="Dedhia N."/>
            <person name="Gnoj L."/>
            <person name="Schutz K."/>
            <person name="Huang E."/>
            <person name="Spiegel L."/>
            <person name="Sekhon M."/>
            <person name="Murray J."/>
            <person name="Sheet P."/>
            <person name="Cordes M."/>
            <person name="Abu-Threideh J."/>
            <person name="Stoneking T."/>
            <person name="Kalicki J."/>
            <person name="Graves T."/>
            <person name="Harmon G."/>
            <person name="Edwards J."/>
            <person name="Latreille P."/>
            <person name="Courtney L."/>
            <person name="Cloud J."/>
            <person name="Abbott A."/>
            <person name="Scott K."/>
            <person name="Johnson D."/>
            <person name="Minx P."/>
            <person name="Bentley D."/>
            <person name="Fulton B."/>
            <person name="Miller N."/>
            <person name="Greco T."/>
            <person name="Kemp K."/>
            <person name="Kramer J."/>
            <person name="Fulton L."/>
            <person name="Mardis E."/>
            <person name="Dante M."/>
            <person name="Pepin K."/>
            <person name="Hillier L.W."/>
            <person name="Nelson J."/>
            <person name="Spieth J."/>
            <person name="Ryan E."/>
            <person name="Andrews S."/>
            <person name="Geisel C."/>
            <person name="Layman D."/>
            <person name="Du H."/>
            <person name="Ali J."/>
            <person name="Berghoff A."/>
            <person name="Jones K."/>
            <person name="Drone K."/>
            <person name="Cotton M."/>
            <person name="Joshu C."/>
            <person name="Antonoiu B."/>
            <person name="Zidanic M."/>
            <person name="Strong C."/>
            <person name="Sun H."/>
            <person name="Lamar B."/>
            <person name="Yordan C."/>
            <person name="Ma P."/>
            <person name="Zhong J."/>
            <person name="Preston R."/>
            <person name="Vil D."/>
            <person name="Shekher M."/>
            <person name="Matero A."/>
            <person name="Shah R."/>
            <person name="Swaby I.K."/>
            <person name="O'Shaughnessy A."/>
            <person name="Rodriguez M."/>
            <person name="Hoffman J."/>
            <person name="Till S."/>
            <person name="Granat S."/>
            <person name="Shohdy N."/>
            <person name="Hasegawa A."/>
            <person name="Hameed A."/>
            <person name="Lodhi M."/>
            <person name="Johnson A."/>
            <person name="Chen E."/>
            <person name="Marra M.A."/>
            <person name="Martienssen R."/>
            <person name="McCombie W.R."/>
        </authorList>
    </citation>
    <scope>NUCLEOTIDE SEQUENCE [LARGE SCALE GENOMIC DNA]</scope>
    <source>
        <strain>cv. Columbia</strain>
    </source>
</reference>
<reference key="2">
    <citation type="journal article" date="2017" name="Plant J.">
        <title>Araport11: a complete reannotation of the Arabidopsis thaliana reference genome.</title>
        <authorList>
            <person name="Cheng C.Y."/>
            <person name="Krishnakumar V."/>
            <person name="Chan A.P."/>
            <person name="Thibaud-Nissen F."/>
            <person name="Schobel S."/>
            <person name="Town C.D."/>
        </authorList>
    </citation>
    <scope>GENOME REANNOTATION</scope>
    <source>
        <strain>cv. Columbia</strain>
    </source>
</reference>
<reference key="3">
    <citation type="journal article" date="2003" name="Science">
        <title>Empirical analysis of transcriptional activity in the Arabidopsis genome.</title>
        <authorList>
            <person name="Yamada K."/>
            <person name="Lim J."/>
            <person name="Dale J.M."/>
            <person name="Chen H."/>
            <person name="Shinn P."/>
            <person name="Palm C.J."/>
            <person name="Southwick A.M."/>
            <person name="Wu H.C."/>
            <person name="Kim C.J."/>
            <person name="Nguyen M."/>
            <person name="Pham P.K."/>
            <person name="Cheuk R.F."/>
            <person name="Karlin-Newmann G."/>
            <person name="Liu S.X."/>
            <person name="Lam B."/>
            <person name="Sakano H."/>
            <person name="Wu T."/>
            <person name="Yu G."/>
            <person name="Miranda M."/>
            <person name="Quach H.L."/>
            <person name="Tripp M."/>
            <person name="Chang C.H."/>
            <person name="Lee J.M."/>
            <person name="Toriumi M.J."/>
            <person name="Chan M.M."/>
            <person name="Tang C.C."/>
            <person name="Onodera C.S."/>
            <person name="Deng J.M."/>
            <person name="Akiyama K."/>
            <person name="Ansari Y."/>
            <person name="Arakawa T."/>
            <person name="Banh J."/>
            <person name="Banno F."/>
            <person name="Bowser L."/>
            <person name="Brooks S.Y."/>
            <person name="Carninci P."/>
            <person name="Chao Q."/>
            <person name="Choy N."/>
            <person name="Enju A."/>
            <person name="Goldsmith A.D."/>
            <person name="Gurjal M."/>
            <person name="Hansen N.F."/>
            <person name="Hayashizaki Y."/>
            <person name="Johnson-Hopson C."/>
            <person name="Hsuan V.W."/>
            <person name="Iida K."/>
            <person name="Karnes M."/>
            <person name="Khan S."/>
            <person name="Koesema E."/>
            <person name="Ishida J."/>
            <person name="Jiang P.X."/>
            <person name="Jones T."/>
            <person name="Kawai J."/>
            <person name="Kamiya A."/>
            <person name="Meyers C."/>
            <person name="Nakajima M."/>
            <person name="Narusaka M."/>
            <person name="Seki M."/>
            <person name="Sakurai T."/>
            <person name="Satou M."/>
            <person name="Tamse R."/>
            <person name="Vaysberg M."/>
            <person name="Wallender E.K."/>
            <person name="Wong C."/>
            <person name="Yamamura Y."/>
            <person name="Yuan S."/>
            <person name="Shinozaki K."/>
            <person name="Davis R.W."/>
            <person name="Theologis A."/>
            <person name="Ecker J.R."/>
        </authorList>
    </citation>
    <scope>NUCLEOTIDE SEQUENCE [LARGE SCALE MRNA] (ISOFORM 1)</scope>
    <source>
        <strain>cv. Columbia</strain>
    </source>
</reference>
<reference key="4">
    <citation type="journal article" date="2004" name="Genome Res.">
        <title>Whole genome sequence comparisons and 'full-length' cDNA sequences: a combined approach to evaluate and improve Arabidopsis genome annotation.</title>
        <authorList>
            <person name="Castelli V."/>
            <person name="Aury J.-M."/>
            <person name="Jaillon O."/>
            <person name="Wincker P."/>
            <person name="Clepet C."/>
            <person name="Menard M."/>
            <person name="Cruaud C."/>
            <person name="Quetier F."/>
            <person name="Scarpelli C."/>
            <person name="Schaechter V."/>
            <person name="Temple G."/>
            <person name="Caboche M."/>
            <person name="Weissenbach J."/>
            <person name="Salanoubat M."/>
        </authorList>
    </citation>
    <scope>NUCLEOTIDE SEQUENCE [LARGE SCALE MRNA] (ISOFORM 2)</scope>
    <source>
        <strain>cv. Columbia</strain>
    </source>
</reference>
<reference key="5">
    <citation type="submission" date="2005-03" db="EMBL/GenBank/DDBJ databases">
        <title>Large-scale analysis of RIKEN Arabidopsis full-length (RAFL) cDNAs.</title>
        <authorList>
            <person name="Totoki Y."/>
            <person name="Seki M."/>
            <person name="Ishida J."/>
            <person name="Nakajima M."/>
            <person name="Enju A."/>
            <person name="Kamiya A."/>
            <person name="Narusaka M."/>
            <person name="Shin-i T."/>
            <person name="Nakagawa M."/>
            <person name="Sakamoto N."/>
            <person name="Oishi K."/>
            <person name="Kohara Y."/>
            <person name="Kobayashi M."/>
            <person name="Toyoda A."/>
            <person name="Sakaki Y."/>
            <person name="Sakurai T."/>
            <person name="Iida K."/>
            <person name="Akiyama K."/>
            <person name="Satou M."/>
            <person name="Toyoda T."/>
            <person name="Konagaya A."/>
            <person name="Carninci P."/>
            <person name="Kawai J."/>
            <person name="Hayashizaki Y."/>
            <person name="Shinozaki K."/>
        </authorList>
    </citation>
    <scope>NUCLEOTIDE SEQUENCE [LARGE SCALE MRNA] OF 194-365 (ISOFORM 1)</scope>
    <source>
        <strain>cv. Columbia</strain>
    </source>
</reference>
<protein>
    <recommendedName>
        <fullName>WAT1-related protein At4g01430</fullName>
    </recommendedName>
</protein>
<sequence length="365" mass="40458">MMKEEQWAPVIVMLISSVAMGSVNALVKKALDVGVNHMIFGAYRMAISALILVPFSYIWERKTRPQLTFMLLCEHFISGLLGASLMQFFFLLGLSYTSATVSMALVSMLPAITFALALIFRIENAQNLKSKAGVLKVMGTLICIMGAMLLTFYKGPELSNPHSHPQARHNNNNNNGHDQTKKWLLGCLYLVIGTVLLSLWMLFQGKLSFKYPGNKYSSTCLMSVFASFQCAILSLYKSRDVKDWIIEDKFVILVTLYAGIVGQAMSTVVTSWSIKMTGAVFVSTFSPVSLVAATLFDFLILHSPLYLGSILGSVVTITGLYVFLWGRKNETDQSVSKTLNSSQFSQNKDNEDHTIANHKDTNLPV</sequence>
<accession>Q9M131</accession>
<accession>A8MS50</accession>
<accession>O81327</accession>
<accession>Q56ZS9</accession>
<feature type="chain" id="PRO_0000421336" description="WAT1-related protein At4g01430">
    <location>
        <begin position="1"/>
        <end position="365"/>
    </location>
</feature>
<feature type="transmembrane region" description="Helical" evidence="2">
    <location>
        <begin position="7"/>
        <end position="27"/>
    </location>
</feature>
<feature type="transmembrane region" description="Helical" evidence="2">
    <location>
        <begin position="39"/>
        <end position="59"/>
    </location>
</feature>
<feature type="transmembrane region" description="Helical" evidence="2">
    <location>
        <begin position="76"/>
        <end position="96"/>
    </location>
</feature>
<feature type="transmembrane region" description="Helical" evidence="2">
    <location>
        <begin position="100"/>
        <end position="120"/>
    </location>
</feature>
<feature type="transmembrane region" description="Helical" evidence="2">
    <location>
        <begin position="132"/>
        <end position="152"/>
    </location>
</feature>
<feature type="transmembrane region" description="Helical" evidence="2">
    <location>
        <begin position="183"/>
        <end position="203"/>
    </location>
</feature>
<feature type="transmembrane region" description="Helical" evidence="2">
    <location>
        <begin position="216"/>
        <end position="236"/>
    </location>
</feature>
<feature type="transmembrane region" description="Helical" evidence="2">
    <location>
        <begin position="250"/>
        <end position="270"/>
    </location>
</feature>
<feature type="transmembrane region" description="Helical" evidence="2">
    <location>
        <begin position="280"/>
        <end position="300"/>
    </location>
</feature>
<feature type="transmembrane region" description="Helical" evidence="2">
    <location>
        <begin position="305"/>
        <end position="325"/>
    </location>
</feature>
<feature type="domain" description="EamA 1">
    <location>
        <begin position="20"/>
        <end position="151"/>
    </location>
</feature>
<feature type="domain" description="EamA 2">
    <location>
        <begin position="216"/>
        <end position="324"/>
    </location>
</feature>
<feature type="region of interest" description="Disordered" evidence="3">
    <location>
        <begin position="339"/>
        <end position="365"/>
    </location>
</feature>
<feature type="compositionally biased region" description="Basic and acidic residues" evidence="3">
    <location>
        <begin position="348"/>
        <end position="365"/>
    </location>
</feature>
<feature type="splice variant" id="VSP_045510" description="In isoform 2." evidence="4">
    <location>
        <begin position="62"/>
        <end position="121"/>
    </location>
</feature>
<feature type="splice variant" id="VSP_045511" description="In isoform 2." evidence="4">
    <original>GSILG</original>
    <variation>AYLDQ</variation>
    <location>
        <begin position="308"/>
        <end position="312"/>
    </location>
</feature>
<feature type="splice variant" id="VSP_045512" description="In isoform 2." evidence="4">
    <location>
        <begin position="313"/>
        <end position="365"/>
    </location>
</feature>
<dbReference type="EMBL" id="AF069300">
    <property type="protein sequence ID" value="AAC19292.1"/>
    <property type="status" value="ALT_SEQ"/>
    <property type="molecule type" value="Genomic_DNA"/>
</dbReference>
<dbReference type="EMBL" id="AL161492">
    <property type="protein sequence ID" value="CAB77713.1"/>
    <property type="molecule type" value="Genomic_DNA"/>
</dbReference>
<dbReference type="EMBL" id="CP002687">
    <property type="protein sequence ID" value="AEE82024.1"/>
    <property type="molecule type" value="Genomic_DNA"/>
</dbReference>
<dbReference type="EMBL" id="AY093220">
    <property type="protein sequence ID" value="AAM13219.1"/>
    <property type="molecule type" value="mRNA"/>
</dbReference>
<dbReference type="EMBL" id="BT002126">
    <property type="protein sequence ID" value="AAN72137.1"/>
    <property type="molecule type" value="mRNA"/>
</dbReference>
<dbReference type="EMBL" id="BX828792">
    <property type="status" value="NOT_ANNOTATED_CDS"/>
    <property type="molecule type" value="mRNA"/>
</dbReference>
<dbReference type="EMBL" id="AK220882">
    <property type="protein sequence ID" value="BAD94279.1"/>
    <property type="status" value="ALT_INIT"/>
    <property type="molecule type" value="mRNA"/>
</dbReference>
<dbReference type="PIR" id="F85018">
    <property type="entry name" value="F85018"/>
</dbReference>
<dbReference type="PIR" id="T01374">
    <property type="entry name" value="T01374"/>
</dbReference>
<dbReference type="RefSeq" id="NP_192052.1">
    <molecule id="Q9M131-1"/>
    <property type="nucleotide sequence ID" value="NM_116373.4"/>
</dbReference>
<dbReference type="SMR" id="Q9M131"/>
<dbReference type="BioGRID" id="11984">
    <property type="interactions" value="4"/>
</dbReference>
<dbReference type="IntAct" id="Q9M131">
    <property type="interactions" value="4"/>
</dbReference>
<dbReference type="STRING" id="3702.Q9M131"/>
<dbReference type="iPTMnet" id="Q9M131"/>
<dbReference type="PaxDb" id="3702-AT4G01430.1"/>
<dbReference type="EnsemblPlants" id="AT4G01430.1">
    <molecule id="Q9M131-1"/>
    <property type="protein sequence ID" value="AT4G01430.1"/>
    <property type="gene ID" value="AT4G01430"/>
</dbReference>
<dbReference type="GeneID" id="826685"/>
<dbReference type="Gramene" id="AT4G01430.1">
    <molecule id="Q9M131-1"/>
    <property type="protein sequence ID" value="AT4G01430.1"/>
    <property type="gene ID" value="AT4G01430"/>
</dbReference>
<dbReference type="KEGG" id="ath:AT4G01430"/>
<dbReference type="Araport" id="AT4G01430"/>
<dbReference type="TAIR" id="AT4G01430">
    <property type="gene designation" value="UMAMIT29"/>
</dbReference>
<dbReference type="eggNOG" id="ENOG502QWIP">
    <property type="taxonomic scope" value="Eukaryota"/>
</dbReference>
<dbReference type="HOGENOM" id="CLU_025359_0_1_1"/>
<dbReference type="InParanoid" id="Q9M131"/>
<dbReference type="OMA" id="EVEAWII"/>
<dbReference type="PhylomeDB" id="Q9M131"/>
<dbReference type="PRO" id="PR:Q9M131"/>
<dbReference type="Proteomes" id="UP000006548">
    <property type="component" value="Chromosome 4"/>
</dbReference>
<dbReference type="ExpressionAtlas" id="Q9M131">
    <property type="expression patterns" value="baseline and differential"/>
</dbReference>
<dbReference type="GO" id="GO:0005886">
    <property type="term" value="C:plasma membrane"/>
    <property type="evidence" value="ECO:0000314"/>
    <property type="project" value="TAIR"/>
</dbReference>
<dbReference type="GO" id="GO:0015186">
    <property type="term" value="F:L-glutamine transmembrane transporter activity"/>
    <property type="evidence" value="ECO:0000314"/>
    <property type="project" value="TAIR"/>
</dbReference>
<dbReference type="GO" id="GO:0048316">
    <property type="term" value="P:seed development"/>
    <property type="evidence" value="ECO:0000315"/>
    <property type="project" value="TAIR"/>
</dbReference>
<dbReference type="InterPro" id="IPR000620">
    <property type="entry name" value="EamA_dom"/>
</dbReference>
<dbReference type="InterPro" id="IPR030184">
    <property type="entry name" value="WAT1-related"/>
</dbReference>
<dbReference type="PANTHER" id="PTHR31218">
    <property type="entry name" value="WAT1-RELATED PROTEIN"/>
    <property type="match status" value="1"/>
</dbReference>
<dbReference type="Pfam" id="PF00892">
    <property type="entry name" value="EamA"/>
    <property type="match status" value="2"/>
</dbReference>
<dbReference type="SUPFAM" id="SSF103481">
    <property type="entry name" value="Multidrug resistance efflux transporter EmrE"/>
    <property type="match status" value="2"/>
</dbReference>
<name>WTR28_ARATH</name>